<feature type="chain" id="PRO_0000129145" description="Tol-Pal system protein TolR">
    <location>
        <begin position="1"/>
        <end position="142"/>
    </location>
</feature>
<feature type="topological domain" description="Cytoplasmic" evidence="2">
    <location>
        <begin position="1"/>
        <end position="17"/>
    </location>
</feature>
<feature type="transmembrane region" description="Helical" evidence="1">
    <location>
        <begin position="18"/>
        <end position="38"/>
    </location>
</feature>
<feature type="topological domain" description="Periplasmic" evidence="2">
    <location>
        <begin position="39"/>
        <end position="142"/>
    </location>
</feature>
<name>TOLR_SHIFL</name>
<keyword id="KW-0131">Cell cycle</keyword>
<keyword id="KW-0132">Cell division</keyword>
<keyword id="KW-0997">Cell inner membrane</keyword>
<keyword id="KW-1003">Cell membrane</keyword>
<keyword id="KW-0472">Membrane</keyword>
<keyword id="KW-1185">Reference proteome</keyword>
<keyword id="KW-0812">Transmembrane</keyword>
<keyword id="KW-1133">Transmembrane helix</keyword>
<accession>P0ABV9</accession>
<accession>P05829</accession>
<evidence type="ECO:0000255" key="1">
    <source>
        <dbReference type="HAMAP-Rule" id="MF_02203"/>
    </source>
</evidence>
<evidence type="ECO:0000305" key="2"/>
<comment type="function">
    <text evidence="1">Part of the Tol-Pal system, which plays a role in outer membrane invagination during cell division and is important for maintaining outer membrane integrity. Required, with TolQ, for the proton motive force-dependent activation of TolA and for TolA-Pal interaction.</text>
</comment>
<comment type="subunit">
    <text evidence="1">The Tol-Pal system is composed of five core proteins: the inner membrane proteins TolA, TolQ and TolR, the periplasmic protein TolB and the outer membrane protein Pal. They form a network linking the inner and outer membranes and the peptidoglycan layer.</text>
</comment>
<comment type="subcellular location">
    <subcellularLocation>
        <location evidence="1">Cell inner membrane</location>
        <topology evidence="1">Single-pass membrane protein</topology>
    </subcellularLocation>
</comment>
<comment type="similarity">
    <text evidence="1 2">Belongs to the ExbD/TolR family.</text>
</comment>
<dbReference type="EMBL" id="AE005674">
    <property type="protein sequence ID" value="AAN42203.1"/>
    <property type="molecule type" value="Genomic_DNA"/>
</dbReference>
<dbReference type="EMBL" id="AE014073">
    <property type="protein sequence ID" value="AAP16076.1"/>
    <property type="molecule type" value="Genomic_DNA"/>
</dbReference>
<dbReference type="RefSeq" id="NP_706496.1">
    <property type="nucleotide sequence ID" value="NC_004337.2"/>
</dbReference>
<dbReference type="RefSeq" id="WP_000090097.1">
    <property type="nucleotide sequence ID" value="NZ_WPGW01000046.1"/>
</dbReference>
<dbReference type="SMR" id="P0ABV9"/>
<dbReference type="STRING" id="198214.SF0559"/>
<dbReference type="PaxDb" id="198214-SF0559"/>
<dbReference type="GeneID" id="1023523"/>
<dbReference type="GeneID" id="93776746"/>
<dbReference type="KEGG" id="sfl:SF0559"/>
<dbReference type="KEGG" id="sfx:S0572"/>
<dbReference type="PATRIC" id="fig|198214.7.peg.648"/>
<dbReference type="HOGENOM" id="CLU_085305_1_3_6"/>
<dbReference type="Proteomes" id="UP000001006">
    <property type="component" value="Chromosome"/>
</dbReference>
<dbReference type="Proteomes" id="UP000002673">
    <property type="component" value="Chromosome"/>
</dbReference>
<dbReference type="GO" id="GO:0005886">
    <property type="term" value="C:plasma membrane"/>
    <property type="evidence" value="ECO:0007669"/>
    <property type="project" value="UniProtKB-SubCell"/>
</dbReference>
<dbReference type="GO" id="GO:0022857">
    <property type="term" value="F:transmembrane transporter activity"/>
    <property type="evidence" value="ECO:0007669"/>
    <property type="project" value="InterPro"/>
</dbReference>
<dbReference type="GO" id="GO:0051301">
    <property type="term" value="P:cell division"/>
    <property type="evidence" value="ECO:0007669"/>
    <property type="project" value="UniProtKB-UniRule"/>
</dbReference>
<dbReference type="GO" id="GO:0015031">
    <property type="term" value="P:protein transport"/>
    <property type="evidence" value="ECO:0007669"/>
    <property type="project" value="InterPro"/>
</dbReference>
<dbReference type="FunFam" id="3.30.420.270:FF:000001">
    <property type="entry name" value="Tol-Pal system protein TolR"/>
    <property type="match status" value="1"/>
</dbReference>
<dbReference type="Gene3D" id="3.30.420.270">
    <property type="match status" value="1"/>
</dbReference>
<dbReference type="HAMAP" id="MF_02203">
    <property type="entry name" value="TolR"/>
    <property type="match status" value="1"/>
</dbReference>
<dbReference type="InterPro" id="IPR003400">
    <property type="entry name" value="ExbD"/>
</dbReference>
<dbReference type="InterPro" id="IPR014168">
    <property type="entry name" value="Tol-Pal_TolR"/>
</dbReference>
<dbReference type="NCBIfam" id="NF008248">
    <property type="entry name" value="PRK11024.1"/>
    <property type="match status" value="1"/>
</dbReference>
<dbReference type="NCBIfam" id="TIGR02801">
    <property type="entry name" value="tolR"/>
    <property type="match status" value="1"/>
</dbReference>
<dbReference type="PANTHER" id="PTHR30558">
    <property type="entry name" value="EXBD MEMBRANE COMPONENT OF PMF-DRIVEN MACROMOLECULE IMPORT SYSTEM"/>
    <property type="match status" value="1"/>
</dbReference>
<dbReference type="PANTHER" id="PTHR30558:SF7">
    <property type="entry name" value="TOL-PAL SYSTEM PROTEIN TOLR"/>
    <property type="match status" value="1"/>
</dbReference>
<dbReference type="Pfam" id="PF02472">
    <property type="entry name" value="ExbD"/>
    <property type="match status" value="1"/>
</dbReference>
<proteinExistence type="inferred from homology"/>
<reference key="1">
    <citation type="journal article" date="2002" name="Nucleic Acids Res.">
        <title>Genome sequence of Shigella flexneri 2a: insights into pathogenicity through comparison with genomes of Escherichia coli K12 and O157.</title>
        <authorList>
            <person name="Jin Q."/>
            <person name="Yuan Z."/>
            <person name="Xu J."/>
            <person name="Wang Y."/>
            <person name="Shen Y."/>
            <person name="Lu W."/>
            <person name="Wang J."/>
            <person name="Liu H."/>
            <person name="Yang J."/>
            <person name="Yang F."/>
            <person name="Zhang X."/>
            <person name="Zhang J."/>
            <person name="Yang G."/>
            <person name="Wu H."/>
            <person name="Qu D."/>
            <person name="Dong J."/>
            <person name="Sun L."/>
            <person name="Xue Y."/>
            <person name="Zhao A."/>
            <person name="Gao Y."/>
            <person name="Zhu J."/>
            <person name="Kan B."/>
            <person name="Ding K."/>
            <person name="Chen S."/>
            <person name="Cheng H."/>
            <person name="Yao Z."/>
            <person name="He B."/>
            <person name="Chen R."/>
            <person name="Ma D."/>
            <person name="Qiang B."/>
            <person name="Wen Y."/>
            <person name="Hou Y."/>
            <person name="Yu J."/>
        </authorList>
    </citation>
    <scope>NUCLEOTIDE SEQUENCE [LARGE SCALE GENOMIC DNA]</scope>
    <source>
        <strain>301 / Serotype 2a</strain>
    </source>
</reference>
<reference key="2">
    <citation type="journal article" date="2003" name="Infect. Immun.">
        <title>Complete genome sequence and comparative genomics of Shigella flexneri serotype 2a strain 2457T.</title>
        <authorList>
            <person name="Wei J."/>
            <person name="Goldberg M.B."/>
            <person name="Burland V."/>
            <person name="Venkatesan M.M."/>
            <person name="Deng W."/>
            <person name="Fournier G."/>
            <person name="Mayhew G.F."/>
            <person name="Plunkett G. III"/>
            <person name="Rose D.J."/>
            <person name="Darling A."/>
            <person name="Mau B."/>
            <person name="Perna N.T."/>
            <person name="Payne S.M."/>
            <person name="Runyen-Janecky L.J."/>
            <person name="Zhou S."/>
            <person name="Schwartz D.C."/>
            <person name="Blattner F.R."/>
        </authorList>
    </citation>
    <scope>NUCLEOTIDE SEQUENCE [LARGE SCALE GENOMIC DNA]</scope>
    <source>
        <strain>ATCC 700930 / 2457T / Serotype 2a</strain>
    </source>
</reference>
<organism>
    <name type="scientific">Shigella flexneri</name>
    <dbReference type="NCBI Taxonomy" id="623"/>
    <lineage>
        <taxon>Bacteria</taxon>
        <taxon>Pseudomonadati</taxon>
        <taxon>Pseudomonadota</taxon>
        <taxon>Gammaproteobacteria</taxon>
        <taxon>Enterobacterales</taxon>
        <taxon>Enterobacteriaceae</taxon>
        <taxon>Shigella</taxon>
    </lineage>
</organism>
<protein>
    <recommendedName>
        <fullName evidence="1">Tol-Pal system protein TolR</fullName>
    </recommendedName>
</protein>
<gene>
    <name evidence="1" type="primary">tolR</name>
    <name type="ordered locus">SF0559</name>
    <name type="ordered locus">S0572</name>
</gene>
<sequence>MARARGRGRRDLKSEINIVPLLDVLLVLLLIFMATAPIITQSVEVDLPDATESQAVSSNDNPPVIVEVSGIGQYTVVVEKDRLERLPPEQVVAEVSSRFKANPKTVFLIGGAKDVPYDEIIKALNLLHSAGVKSVGLMTQPI</sequence>